<reference key="1">
    <citation type="journal article" date="2008" name="BMC Genomics">
        <title>Genomics of an extreme psychrophile, Psychromonas ingrahamii.</title>
        <authorList>
            <person name="Riley M."/>
            <person name="Staley J.T."/>
            <person name="Danchin A."/>
            <person name="Wang T.Z."/>
            <person name="Brettin T.S."/>
            <person name="Hauser L.J."/>
            <person name="Land M.L."/>
            <person name="Thompson L.S."/>
        </authorList>
    </citation>
    <scope>NUCLEOTIDE SEQUENCE [LARGE SCALE GENOMIC DNA]</scope>
    <source>
        <strain>DSM 17664 / CCUG 51855 / 37</strain>
    </source>
</reference>
<evidence type="ECO:0000255" key="1">
    <source>
        <dbReference type="HAMAP-Rule" id="MF_00185"/>
    </source>
</evidence>
<name>MIAA_PSYIN</name>
<keyword id="KW-0067">ATP-binding</keyword>
<keyword id="KW-0460">Magnesium</keyword>
<keyword id="KW-0547">Nucleotide-binding</keyword>
<keyword id="KW-1185">Reference proteome</keyword>
<keyword id="KW-0808">Transferase</keyword>
<keyword id="KW-0819">tRNA processing</keyword>
<accession>A1SZL1</accession>
<dbReference type="EC" id="2.5.1.75" evidence="1"/>
<dbReference type="EMBL" id="CP000510">
    <property type="protein sequence ID" value="ABM04926.1"/>
    <property type="molecule type" value="Genomic_DNA"/>
</dbReference>
<dbReference type="RefSeq" id="WP_011771478.1">
    <property type="nucleotide sequence ID" value="NC_008709.1"/>
</dbReference>
<dbReference type="SMR" id="A1SZL1"/>
<dbReference type="STRING" id="357804.Ping_3239"/>
<dbReference type="KEGG" id="pin:Ping_3239"/>
<dbReference type="eggNOG" id="COG0324">
    <property type="taxonomic scope" value="Bacteria"/>
</dbReference>
<dbReference type="HOGENOM" id="CLU_032616_0_0_6"/>
<dbReference type="OrthoDB" id="9776390at2"/>
<dbReference type="Proteomes" id="UP000000639">
    <property type="component" value="Chromosome"/>
</dbReference>
<dbReference type="GO" id="GO:0005524">
    <property type="term" value="F:ATP binding"/>
    <property type="evidence" value="ECO:0007669"/>
    <property type="project" value="UniProtKB-UniRule"/>
</dbReference>
<dbReference type="GO" id="GO:0052381">
    <property type="term" value="F:tRNA dimethylallyltransferase activity"/>
    <property type="evidence" value="ECO:0007669"/>
    <property type="project" value="UniProtKB-UniRule"/>
</dbReference>
<dbReference type="GO" id="GO:0006400">
    <property type="term" value="P:tRNA modification"/>
    <property type="evidence" value="ECO:0007669"/>
    <property type="project" value="TreeGrafter"/>
</dbReference>
<dbReference type="FunFam" id="1.10.20.140:FF:000001">
    <property type="entry name" value="tRNA dimethylallyltransferase"/>
    <property type="match status" value="1"/>
</dbReference>
<dbReference type="Gene3D" id="1.10.20.140">
    <property type="match status" value="1"/>
</dbReference>
<dbReference type="Gene3D" id="3.40.50.300">
    <property type="entry name" value="P-loop containing nucleotide triphosphate hydrolases"/>
    <property type="match status" value="1"/>
</dbReference>
<dbReference type="HAMAP" id="MF_00185">
    <property type="entry name" value="IPP_trans"/>
    <property type="match status" value="1"/>
</dbReference>
<dbReference type="InterPro" id="IPR039657">
    <property type="entry name" value="Dimethylallyltransferase"/>
</dbReference>
<dbReference type="InterPro" id="IPR018022">
    <property type="entry name" value="IPT"/>
</dbReference>
<dbReference type="InterPro" id="IPR027417">
    <property type="entry name" value="P-loop_NTPase"/>
</dbReference>
<dbReference type="NCBIfam" id="TIGR00174">
    <property type="entry name" value="miaA"/>
    <property type="match status" value="1"/>
</dbReference>
<dbReference type="PANTHER" id="PTHR11088">
    <property type="entry name" value="TRNA DIMETHYLALLYLTRANSFERASE"/>
    <property type="match status" value="1"/>
</dbReference>
<dbReference type="PANTHER" id="PTHR11088:SF60">
    <property type="entry name" value="TRNA DIMETHYLALLYLTRANSFERASE"/>
    <property type="match status" value="1"/>
</dbReference>
<dbReference type="Pfam" id="PF01715">
    <property type="entry name" value="IPPT"/>
    <property type="match status" value="1"/>
</dbReference>
<dbReference type="SUPFAM" id="SSF52540">
    <property type="entry name" value="P-loop containing nucleoside triphosphate hydrolases"/>
    <property type="match status" value="1"/>
</dbReference>
<protein>
    <recommendedName>
        <fullName evidence="1">tRNA dimethylallyltransferase</fullName>
        <ecNumber evidence="1">2.5.1.75</ecNumber>
    </recommendedName>
    <alternativeName>
        <fullName evidence="1">Dimethylallyl diphosphate:tRNA dimethylallyltransferase</fullName>
        <shortName evidence="1">DMAPP:tRNA dimethylallyltransferase</shortName>
        <shortName evidence="1">DMATase</shortName>
    </alternativeName>
    <alternativeName>
        <fullName evidence="1">Isopentenyl-diphosphate:tRNA isopentenyltransferase</fullName>
        <shortName evidence="1">IPP transferase</shortName>
        <shortName evidence="1">IPPT</shortName>
        <shortName evidence="1">IPTase</shortName>
    </alternativeName>
</protein>
<organism>
    <name type="scientific">Psychromonas ingrahamii (strain DSM 17664 / CCUG 51855 / 37)</name>
    <dbReference type="NCBI Taxonomy" id="357804"/>
    <lineage>
        <taxon>Bacteria</taxon>
        <taxon>Pseudomonadati</taxon>
        <taxon>Pseudomonadota</taxon>
        <taxon>Gammaproteobacteria</taxon>
        <taxon>Alteromonadales</taxon>
        <taxon>Psychromonadaceae</taxon>
        <taxon>Psychromonas</taxon>
    </lineage>
</organism>
<comment type="function">
    <text evidence="1">Catalyzes the transfer of a dimethylallyl group onto the adenine at position 37 in tRNAs that read codons beginning with uridine, leading to the formation of N6-(dimethylallyl)adenosine (i(6)A).</text>
</comment>
<comment type="catalytic activity">
    <reaction evidence="1">
        <text>adenosine(37) in tRNA + dimethylallyl diphosphate = N(6)-dimethylallyladenosine(37) in tRNA + diphosphate</text>
        <dbReference type="Rhea" id="RHEA:26482"/>
        <dbReference type="Rhea" id="RHEA-COMP:10162"/>
        <dbReference type="Rhea" id="RHEA-COMP:10375"/>
        <dbReference type="ChEBI" id="CHEBI:33019"/>
        <dbReference type="ChEBI" id="CHEBI:57623"/>
        <dbReference type="ChEBI" id="CHEBI:74411"/>
        <dbReference type="ChEBI" id="CHEBI:74415"/>
        <dbReference type="EC" id="2.5.1.75"/>
    </reaction>
</comment>
<comment type="cofactor">
    <cofactor evidence="1">
        <name>Mg(2+)</name>
        <dbReference type="ChEBI" id="CHEBI:18420"/>
    </cofactor>
</comment>
<comment type="subunit">
    <text evidence="1">Monomer.</text>
</comment>
<comment type="similarity">
    <text evidence="1">Belongs to the IPP transferase family.</text>
</comment>
<sequence>MNNYPTALFLMGPTASGKTDLAIKLALQCDCEIISVDSALIYKGMDIGTAKPSNHELQQVPHALVDIIDPLESYSAGDFREDALSLMQEITDRGHTPLLVGGTMLYYKALVDGLSPLPSANPKVRAQIEKEALENGWQALHDKLEQIDPVSAARIHVNDPQRLARALEVFRISGKSLTELTKVKSDPIPYNIKQFAIAPLEKSVLHARIEQRFELMLESGFEQEVRKLYQRGDLHLDLPSMRCVGYRQMWEYLQGTMDYEEMRFRGIVATRQLAKRQMTWLRGWQNVTWLETGHADNFERIKAML</sequence>
<gene>
    <name evidence="1" type="primary">miaA</name>
    <name type="ordered locus">Ping_3239</name>
</gene>
<proteinExistence type="inferred from homology"/>
<feature type="chain" id="PRO_1000020648" description="tRNA dimethylallyltransferase">
    <location>
        <begin position="1"/>
        <end position="305"/>
    </location>
</feature>
<feature type="region of interest" description="Interaction with substrate tRNA" evidence="1">
    <location>
        <begin position="37"/>
        <end position="40"/>
    </location>
</feature>
<feature type="region of interest" description="Interaction with substrate tRNA" evidence="1">
    <location>
        <begin position="161"/>
        <end position="165"/>
    </location>
</feature>
<feature type="region of interest" description="Interaction with substrate tRNA" evidence="1">
    <location>
        <begin position="242"/>
        <end position="247"/>
    </location>
</feature>
<feature type="binding site" evidence="1">
    <location>
        <begin position="12"/>
        <end position="19"/>
    </location>
    <ligand>
        <name>ATP</name>
        <dbReference type="ChEBI" id="CHEBI:30616"/>
    </ligand>
</feature>
<feature type="binding site" evidence="1">
    <location>
        <begin position="14"/>
        <end position="19"/>
    </location>
    <ligand>
        <name>substrate</name>
    </ligand>
</feature>
<feature type="site" description="Interaction with substrate tRNA" evidence="1">
    <location>
        <position position="103"/>
    </location>
</feature>
<feature type="site" description="Interaction with substrate tRNA" evidence="1">
    <location>
        <position position="125"/>
    </location>
</feature>